<dbReference type="EC" id="4.1.1.39" evidence="1"/>
<dbReference type="EMBL" id="AF307091">
    <property type="protein sequence ID" value="AAK00291.1"/>
    <property type="molecule type" value="Genomic_DNA"/>
</dbReference>
<dbReference type="EMBL" id="CP001219">
    <property type="protein sequence ID" value="ACK80366.1"/>
    <property type="molecule type" value="Genomic_DNA"/>
</dbReference>
<dbReference type="RefSeq" id="WP_009566926.1">
    <property type="nucleotide sequence ID" value="NC_011761.1"/>
</dbReference>
<dbReference type="SMR" id="B7JA24"/>
<dbReference type="STRING" id="243159.AFE_3051"/>
<dbReference type="PaxDb" id="243159-AFE_3051"/>
<dbReference type="GeneID" id="65282053"/>
<dbReference type="KEGG" id="afr:AFE_3051"/>
<dbReference type="eggNOG" id="COG1850">
    <property type="taxonomic scope" value="Bacteria"/>
</dbReference>
<dbReference type="HOGENOM" id="CLU_031450_2_0_6"/>
<dbReference type="CD-CODE" id="B70647E2">
    <property type="entry name" value="Synthetic Condensate 000160"/>
</dbReference>
<dbReference type="Proteomes" id="UP000001362">
    <property type="component" value="Chromosome"/>
</dbReference>
<dbReference type="GO" id="GO:0000287">
    <property type="term" value="F:magnesium ion binding"/>
    <property type="evidence" value="ECO:0007669"/>
    <property type="project" value="UniProtKB-UniRule"/>
</dbReference>
<dbReference type="GO" id="GO:0004497">
    <property type="term" value="F:monooxygenase activity"/>
    <property type="evidence" value="ECO:0007669"/>
    <property type="project" value="UniProtKB-KW"/>
</dbReference>
<dbReference type="GO" id="GO:0016984">
    <property type="term" value="F:ribulose-bisphosphate carboxylase activity"/>
    <property type="evidence" value="ECO:0007669"/>
    <property type="project" value="UniProtKB-UniRule"/>
</dbReference>
<dbReference type="GO" id="GO:0019253">
    <property type="term" value="P:reductive pentose-phosphate cycle"/>
    <property type="evidence" value="ECO:0007669"/>
    <property type="project" value="UniProtKB-UniRule"/>
</dbReference>
<dbReference type="Gene3D" id="3.20.20.110">
    <property type="entry name" value="Ribulose bisphosphate carboxylase, large subunit, C-terminal domain"/>
    <property type="match status" value="1"/>
</dbReference>
<dbReference type="Gene3D" id="3.30.70.150">
    <property type="entry name" value="RuBisCO large subunit, N-terminal domain"/>
    <property type="match status" value="1"/>
</dbReference>
<dbReference type="HAMAP" id="MF_01338">
    <property type="entry name" value="RuBisCO_L_type1"/>
    <property type="match status" value="1"/>
</dbReference>
<dbReference type="InterPro" id="IPR033966">
    <property type="entry name" value="RuBisCO"/>
</dbReference>
<dbReference type="InterPro" id="IPR020878">
    <property type="entry name" value="RuBisCo_large_chain_AS"/>
</dbReference>
<dbReference type="InterPro" id="IPR000685">
    <property type="entry name" value="RuBisCO_lsu_C"/>
</dbReference>
<dbReference type="InterPro" id="IPR036376">
    <property type="entry name" value="RuBisCO_lsu_C_sf"/>
</dbReference>
<dbReference type="InterPro" id="IPR017443">
    <property type="entry name" value="RuBisCO_lsu_fd_N"/>
</dbReference>
<dbReference type="InterPro" id="IPR036422">
    <property type="entry name" value="RuBisCO_lsu_N_sf"/>
</dbReference>
<dbReference type="InterPro" id="IPR020888">
    <property type="entry name" value="RuBisCO_lsuI"/>
</dbReference>
<dbReference type="NCBIfam" id="NF003252">
    <property type="entry name" value="PRK04208.1"/>
    <property type="match status" value="1"/>
</dbReference>
<dbReference type="PANTHER" id="PTHR42704">
    <property type="entry name" value="RIBULOSE BISPHOSPHATE CARBOXYLASE"/>
    <property type="match status" value="1"/>
</dbReference>
<dbReference type="PANTHER" id="PTHR42704:SF17">
    <property type="entry name" value="RIBULOSE BISPHOSPHATE CARBOXYLASE LARGE CHAIN"/>
    <property type="match status" value="1"/>
</dbReference>
<dbReference type="Pfam" id="PF00016">
    <property type="entry name" value="RuBisCO_large"/>
    <property type="match status" value="1"/>
</dbReference>
<dbReference type="Pfam" id="PF02788">
    <property type="entry name" value="RuBisCO_large_N"/>
    <property type="match status" value="1"/>
</dbReference>
<dbReference type="SFLD" id="SFLDG01052">
    <property type="entry name" value="RuBisCO"/>
    <property type="match status" value="1"/>
</dbReference>
<dbReference type="SFLD" id="SFLDS00014">
    <property type="entry name" value="RuBisCO"/>
    <property type="match status" value="1"/>
</dbReference>
<dbReference type="SFLD" id="SFLDG00301">
    <property type="entry name" value="RuBisCO-like_proteins"/>
    <property type="match status" value="1"/>
</dbReference>
<dbReference type="SUPFAM" id="SSF51649">
    <property type="entry name" value="RuBisCo, C-terminal domain"/>
    <property type="match status" value="1"/>
</dbReference>
<dbReference type="SUPFAM" id="SSF54966">
    <property type="entry name" value="RuBisCO, large subunit, small (N-terminal) domain"/>
    <property type="match status" value="1"/>
</dbReference>
<dbReference type="PROSITE" id="PS00157">
    <property type="entry name" value="RUBISCO_LARGE"/>
    <property type="match status" value="1"/>
</dbReference>
<name>RBL1B_ACIF2</name>
<organism>
    <name type="scientific">Acidithiobacillus ferrooxidans (strain ATCC 23270 / DSM 14882 / CIP 104768 / NCIMB 8455)</name>
    <name type="common">Ferrobacillus ferrooxidans (strain ATCC 23270)</name>
    <dbReference type="NCBI Taxonomy" id="243159"/>
    <lineage>
        <taxon>Bacteria</taxon>
        <taxon>Pseudomonadati</taxon>
        <taxon>Pseudomonadota</taxon>
        <taxon>Acidithiobacillia</taxon>
        <taxon>Acidithiobacillales</taxon>
        <taxon>Acidithiobacillaceae</taxon>
        <taxon>Acidithiobacillus</taxon>
    </lineage>
</organism>
<accession>B7JA24</accession>
<accession>Q07087</accession>
<accession>Q9APC8</accession>
<feature type="chain" id="PRO_0000369191" description="Ribulose bisphosphate carboxylase large chain 2">
    <location>
        <begin position="1"/>
        <end position="473"/>
    </location>
</feature>
<feature type="active site" description="Proton acceptor" evidence="1">
    <location>
        <position position="168"/>
    </location>
</feature>
<feature type="active site" description="Proton acceptor" evidence="1">
    <location>
        <position position="287"/>
    </location>
</feature>
<feature type="binding site" description="in homodimeric partner" evidence="1">
    <location>
        <position position="116"/>
    </location>
    <ligand>
        <name>substrate</name>
    </ligand>
</feature>
<feature type="binding site" evidence="1">
    <location>
        <position position="166"/>
    </location>
    <ligand>
        <name>substrate</name>
    </ligand>
</feature>
<feature type="binding site" evidence="1">
    <location>
        <position position="170"/>
    </location>
    <ligand>
        <name>substrate</name>
    </ligand>
</feature>
<feature type="binding site" description="via carbamate group" evidence="1">
    <location>
        <position position="194"/>
    </location>
    <ligand>
        <name>Mg(2+)</name>
        <dbReference type="ChEBI" id="CHEBI:18420"/>
    </ligand>
</feature>
<feature type="binding site" evidence="1">
    <location>
        <position position="196"/>
    </location>
    <ligand>
        <name>Mg(2+)</name>
        <dbReference type="ChEBI" id="CHEBI:18420"/>
    </ligand>
</feature>
<feature type="binding site" evidence="1">
    <location>
        <position position="197"/>
    </location>
    <ligand>
        <name>Mg(2+)</name>
        <dbReference type="ChEBI" id="CHEBI:18420"/>
    </ligand>
</feature>
<feature type="binding site" evidence="1">
    <location>
        <position position="288"/>
    </location>
    <ligand>
        <name>substrate</name>
    </ligand>
</feature>
<feature type="binding site" evidence="1">
    <location>
        <position position="320"/>
    </location>
    <ligand>
        <name>substrate</name>
    </ligand>
</feature>
<feature type="binding site" evidence="1">
    <location>
        <position position="372"/>
    </location>
    <ligand>
        <name>substrate</name>
    </ligand>
</feature>
<feature type="site" description="Transition state stabilizer" evidence="1">
    <location>
        <position position="327"/>
    </location>
</feature>
<feature type="modified residue" description="N6-carboxylysine" evidence="1">
    <location>
        <position position="194"/>
    </location>
</feature>
<feature type="sequence conflict" description="In Ref. 1; AAK00291." evidence="2" ref="1">
    <original>L</original>
    <variation>I</variation>
    <location>
        <position position="400"/>
    </location>
</feature>
<gene>
    <name evidence="1" type="primary">cbbL2</name>
    <name evidence="1" type="synonym">rbcL2</name>
    <name type="ordered locus">AFE_3051</name>
</gene>
<comment type="function">
    <text evidence="1">RuBisCO catalyzes two reactions: the carboxylation of D-ribulose 1,5-bisphosphate, the primary event in carbon dioxide fixation, as well as the oxidative fragmentation of the pentose substrate. Both reactions occur simultaneously and in competition at the same active site.</text>
</comment>
<comment type="catalytic activity">
    <reaction evidence="1">
        <text>2 (2R)-3-phosphoglycerate + 2 H(+) = D-ribulose 1,5-bisphosphate + CO2 + H2O</text>
        <dbReference type="Rhea" id="RHEA:23124"/>
        <dbReference type="ChEBI" id="CHEBI:15377"/>
        <dbReference type="ChEBI" id="CHEBI:15378"/>
        <dbReference type="ChEBI" id="CHEBI:16526"/>
        <dbReference type="ChEBI" id="CHEBI:57870"/>
        <dbReference type="ChEBI" id="CHEBI:58272"/>
        <dbReference type="EC" id="4.1.1.39"/>
    </reaction>
</comment>
<comment type="catalytic activity">
    <reaction evidence="1">
        <text>D-ribulose 1,5-bisphosphate + O2 = 2-phosphoglycolate + (2R)-3-phosphoglycerate + 2 H(+)</text>
        <dbReference type="Rhea" id="RHEA:36631"/>
        <dbReference type="ChEBI" id="CHEBI:15378"/>
        <dbReference type="ChEBI" id="CHEBI:15379"/>
        <dbReference type="ChEBI" id="CHEBI:57870"/>
        <dbReference type="ChEBI" id="CHEBI:58033"/>
        <dbReference type="ChEBI" id="CHEBI:58272"/>
    </reaction>
</comment>
<comment type="cofactor">
    <cofactor evidence="1">
        <name>Mg(2+)</name>
        <dbReference type="ChEBI" id="CHEBI:18420"/>
    </cofactor>
    <text evidence="1">Binds 1 Mg(2+) ion per subunit.</text>
</comment>
<comment type="subunit">
    <text evidence="1">Heterohexadecamer of 8 large chains and 8 small chains.</text>
</comment>
<comment type="miscellaneous">
    <text evidence="1">The basic functional RuBisCO is composed of a large chain homodimer in a 'head-to-tail' conformation. In form I RuBisCO this homodimer is arranged in a barrel-like tetramer with the small subunits forming a tetrameric 'cap' on each end of the 'barrel'.</text>
</comment>
<comment type="similarity">
    <text evidence="1">Belongs to the RuBisCO large chain family. Type I subfamily.</text>
</comment>
<comment type="caution">
    <text evidence="2">In A.ferrooxidans two similar set of genes code for RuBisCO large and small chains: the rbcL1-rbcS1 and the rbcL2-rbcS2 sets.</text>
</comment>
<protein>
    <recommendedName>
        <fullName evidence="1">Ribulose bisphosphate carboxylase large chain 2</fullName>
        <shortName evidence="1">RuBisCO large subunit 2</shortName>
        <ecNumber evidence="1">4.1.1.39</ecNumber>
    </recommendedName>
</protein>
<proteinExistence type="inferred from homology"/>
<sequence length="473" mass="52702">MAVKTYNAGVKDYRNTYWEPDYSVKDTDILAVFKITPQAGVDREEAAAAVAAESSTGTWTTVWTDLLTDLDYYKGRAYRIEDVPGDDTCFYAFIAYPIDLFEEGSVVNVFTSLVGNVFGFKAVRALRLEDVRFPIAYVKTCGGPPHGIQVERDIMNKYGRPLLGCTIKPKLGLSAKNYGRACYEGLRGGLDFTKDDENVNSQPFMRWRQRFDFVMEAIQKAEAETGERKGHYLNVTAPTPEEMYKRAEYAKEIGAPIIMHDYITGGFCANTGLANWCRDNGMLLHIHRAMHAVLDRNPHHGIHFRVLTKILRLSGGDHLHSGTVVGKLEGDREATLGWIDIMRDRFIKEDRSRGIFFDQDWGSMPGVMPVASGGIHVWHMPALVTIFGDDSVLQFGGGTLGHPWGNAAGAAANRVALEACVEARNRGVAIEKEGKAVLTEAAKHSPELKIAMETWKEIKFEFDTVDKLDVAHK</sequence>
<keyword id="KW-0113">Calvin cycle</keyword>
<keyword id="KW-0120">Carbon dioxide fixation</keyword>
<keyword id="KW-0456">Lyase</keyword>
<keyword id="KW-0460">Magnesium</keyword>
<keyword id="KW-0479">Metal-binding</keyword>
<keyword id="KW-0503">Monooxygenase</keyword>
<keyword id="KW-0560">Oxidoreductase</keyword>
<keyword id="KW-1185">Reference proteome</keyword>
<evidence type="ECO:0000255" key="1">
    <source>
        <dbReference type="HAMAP-Rule" id="MF_01338"/>
    </source>
</evidence>
<evidence type="ECO:0000305" key="2"/>
<reference key="1">
    <citation type="submission" date="2000-09" db="EMBL/GenBank/DDBJ databases">
        <title>Thiobacillus ferrooxidans ATCC 23270, the type strain, possesses two sets of form I ribulose bisphosphate carboxylase/oxygenase (RuBisCO) genes and a form II RuBisCO gene.</title>
        <authorList>
            <person name="Heinhorst S."/>
            <person name="Rugh D."/>
            <person name="Cannon G.C."/>
            <person name="Shively J.M."/>
        </authorList>
    </citation>
    <scope>NUCLEOTIDE SEQUENCE [GENOMIC DNA]</scope>
</reference>
<reference key="2">
    <citation type="journal article" date="2008" name="BMC Genomics">
        <title>Acidithiobacillus ferrooxidans metabolism: from genome sequence to industrial applications.</title>
        <authorList>
            <person name="Valdes J."/>
            <person name="Pedroso I."/>
            <person name="Quatrini R."/>
            <person name="Dodson R.J."/>
            <person name="Tettelin H."/>
            <person name="Blake R. II"/>
            <person name="Eisen J.A."/>
            <person name="Holmes D.S."/>
        </authorList>
    </citation>
    <scope>NUCLEOTIDE SEQUENCE [LARGE SCALE GENOMIC DNA]</scope>
    <source>
        <strain>ATCC 23270 / DSM 14882 / CIP 104768 / NCIMB 8455</strain>
    </source>
</reference>